<gene>
    <name evidence="1" type="primary">gyrA</name>
    <name type="ordered locus">MSMEG_0006</name>
    <name type="ordered locus">MSMEI_0008</name>
</gene>
<reference key="1">
    <citation type="journal article" date="1996" name="Antimicrob. Agents Chemother.">
        <title>Sequence analysis, purification, and study of inhibition by 4-quinolones of the DNA gyrase from Mycobacterium smegmatis.</title>
        <authorList>
            <person name="Revel-Viravau V."/>
            <person name="Truong Q.C."/>
            <person name="Moreau N."/>
            <person name="Jarlier V."/>
            <person name="Sougakoff W."/>
        </authorList>
    </citation>
    <scope>NUCLEOTIDE SEQUENCE [GENOMIC DNA]</scope>
    <scope>FUNCTION</scope>
    <scope>SUBUNIT</scope>
    <scope>ACTIVITY REGULATION</scope>
    <source>
        <strain>ATCC 700084 / mc(2)155</strain>
    </source>
</reference>
<reference key="2">
    <citation type="submission" date="2006-10" db="EMBL/GenBank/DDBJ databases">
        <authorList>
            <person name="Fleischmann R.D."/>
            <person name="Dodson R.J."/>
            <person name="Haft D.H."/>
            <person name="Merkel J.S."/>
            <person name="Nelson W.C."/>
            <person name="Fraser C.M."/>
        </authorList>
    </citation>
    <scope>NUCLEOTIDE SEQUENCE [LARGE SCALE GENOMIC DNA]</scope>
    <source>
        <strain>ATCC 700084 / mc(2)155</strain>
    </source>
</reference>
<reference key="3">
    <citation type="journal article" date="2007" name="Genome Biol.">
        <title>Interrupted coding sequences in Mycobacterium smegmatis: authentic mutations or sequencing errors?</title>
        <authorList>
            <person name="Deshayes C."/>
            <person name="Perrodou E."/>
            <person name="Gallien S."/>
            <person name="Euphrasie D."/>
            <person name="Schaeffer C."/>
            <person name="Van-Dorsselaer A."/>
            <person name="Poch O."/>
            <person name="Lecompte O."/>
            <person name="Reyrat J.-M."/>
        </authorList>
    </citation>
    <scope>NUCLEOTIDE SEQUENCE [LARGE SCALE GENOMIC DNA]</scope>
    <source>
        <strain>ATCC 700084 / mc(2)155</strain>
    </source>
</reference>
<reference key="4">
    <citation type="journal article" date="2009" name="Genome Res.">
        <title>Ortho-proteogenomics: multiple proteomes investigation through orthology and a new MS-based protocol.</title>
        <authorList>
            <person name="Gallien S."/>
            <person name="Perrodou E."/>
            <person name="Carapito C."/>
            <person name="Deshayes C."/>
            <person name="Reyrat J.-M."/>
            <person name="Van Dorsselaer A."/>
            <person name="Poch O."/>
            <person name="Schaeffer C."/>
            <person name="Lecompte O."/>
        </authorList>
    </citation>
    <scope>NUCLEOTIDE SEQUENCE [LARGE SCALE GENOMIC DNA]</scope>
    <source>
        <strain>ATCC 700084 / mc(2)155</strain>
    </source>
</reference>
<proteinExistence type="evidence at protein level"/>
<dbReference type="EC" id="5.6.2.2" evidence="1"/>
<dbReference type="EMBL" id="X94224">
    <property type="protein sequence ID" value="CAA63918.1"/>
    <property type="molecule type" value="Genomic_DNA"/>
</dbReference>
<dbReference type="EMBL" id="CP000480">
    <property type="protein sequence ID" value="ABK69994.1"/>
    <property type="molecule type" value="Genomic_DNA"/>
</dbReference>
<dbReference type="EMBL" id="CP001663">
    <property type="protein sequence ID" value="AFP36493.1"/>
    <property type="molecule type" value="Genomic_DNA"/>
</dbReference>
<dbReference type="RefSeq" id="WP_003891334.1">
    <property type="nucleotide sequence ID" value="NZ_SIJM01000001.1"/>
</dbReference>
<dbReference type="RefSeq" id="YP_884429.1">
    <property type="nucleotide sequence ID" value="NC_008596.1"/>
</dbReference>
<dbReference type="SMR" id="P48354"/>
<dbReference type="STRING" id="246196.MSMEG_0006"/>
<dbReference type="PaxDb" id="246196-MSMEI_0008"/>
<dbReference type="GeneID" id="93454933"/>
<dbReference type="KEGG" id="msb:LJ00_00030"/>
<dbReference type="KEGG" id="msg:MSMEI_0008"/>
<dbReference type="KEGG" id="msm:MSMEG_0006"/>
<dbReference type="PATRIC" id="fig|246196.19.peg.6"/>
<dbReference type="eggNOG" id="COG0188">
    <property type="taxonomic scope" value="Bacteria"/>
</dbReference>
<dbReference type="OrthoDB" id="9806486at2"/>
<dbReference type="Proteomes" id="UP000000757">
    <property type="component" value="Chromosome"/>
</dbReference>
<dbReference type="Proteomes" id="UP000006158">
    <property type="component" value="Chromosome"/>
</dbReference>
<dbReference type="GO" id="GO:0005694">
    <property type="term" value="C:chromosome"/>
    <property type="evidence" value="ECO:0007669"/>
    <property type="project" value="InterPro"/>
</dbReference>
<dbReference type="GO" id="GO:0005737">
    <property type="term" value="C:cytoplasm"/>
    <property type="evidence" value="ECO:0007669"/>
    <property type="project" value="UniProtKB-SubCell"/>
</dbReference>
<dbReference type="GO" id="GO:0009330">
    <property type="term" value="C:DNA topoisomerase type II (double strand cut, ATP-hydrolyzing) complex"/>
    <property type="evidence" value="ECO:0007669"/>
    <property type="project" value="TreeGrafter"/>
</dbReference>
<dbReference type="GO" id="GO:0005524">
    <property type="term" value="F:ATP binding"/>
    <property type="evidence" value="ECO:0007669"/>
    <property type="project" value="UniProtKB-UniRule"/>
</dbReference>
<dbReference type="GO" id="GO:0003677">
    <property type="term" value="F:DNA binding"/>
    <property type="evidence" value="ECO:0007669"/>
    <property type="project" value="UniProtKB-UniRule"/>
</dbReference>
<dbReference type="GO" id="GO:0034335">
    <property type="term" value="F:DNA negative supercoiling activity"/>
    <property type="evidence" value="ECO:0000314"/>
    <property type="project" value="UniProtKB"/>
</dbReference>
<dbReference type="GO" id="GO:0006265">
    <property type="term" value="P:DNA topological change"/>
    <property type="evidence" value="ECO:0007669"/>
    <property type="project" value="UniProtKB-UniRule"/>
</dbReference>
<dbReference type="GO" id="GO:0006261">
    <property type="term" value="P:DNA-templated DNA replication"/>
    <property type="evidence" value="ECO:0007669"/>
    <property type="project" value="UniProtKB-UniRule"/>
</dbReference>
<dbReference type="GO" id="GO:0046677">
    <property type="term" value="P:response to antibiotic"/>
    <property type="evidence" value="ECO:0007669"/>
    <property type="project" value="UniProtKB-KW"/>
</dbReference>
<dbReference type="CDD" id="cd00187">
    <property type="entry name" value="TOP4c"/>
    <property type="match status" value="1"/>
</dbReference>
<dbReference type="FunFam" id="1.10.268.10:FF:000001">
    <property type="entry name" value="DNA gyrase subunit A"/>
    <property type="match status" value="1"/>
</dbReference>
<dbReference type="FunFam" id="2.120.10.90:FF:000001">
    <property type="entry name" value="DNA gyrase subunit A"/>
    <property type="match status" value="1"/>
</dbReference>
<dbReference type="FunFam" id="3.90.199.10:FF:000001">
    <property type="entry name" value="DNA gyrase subunit A"/>
    <property type="match status" value="1"/>
</dbReference>
<dbReference type="FunFam" id="3.30.1360.40:FF:000008">
    <property type="entry name" value="DNA topoisomerase (ATP-hydrolyzing)"/>
    <property type="match status" value="1"/>
</dbReference>
<dbReference type="Gene3D" id="3.30.1360.40">
    <property type="match status" value="1"/>
</dbReference>
<dbReference type="Gene3D" id="2.120.10.90">
    <property type="entry name" value="DNA gyrase/topoisomerase IV, subunit A, C-terminal"/>
    <property type="match status" value="1"/>
</dbReference>
<dbReference type="Gene3D" id="3.90.199.10">
    <property type="entry name" value="Topoisomerase II, domain 5"/>
    <property type="match status" value="1"/>
</dbReference>
<dbReference type="Gene3D" id="1.10.268.10">
    <property type="entry name" value="Topoisomerase, domain 3"/>
    <property type="match status" value="1"/>
</dbReference>
<dbReference type="HAMAP" id="MF_01897">
    <property type="entry name" value="GyrA"/>
    <property type="match status" value="1"/>
</dbReference>
<dbReference type="InterPro" id="IPR005743">
    <property type="entry name" value="GyrA"/>
</dbReference>
<dbReference type="InterPro" id="IPR006691">
    <property type="entry name" value="GyrA/parC_rep"/>
</dbReference>
<dbReference type="InterPro" id="IPR035516">
    <property type="entry name" value="Gyrase/topoIV_suA_C"/>
</dbReference>
<dbReference type="InterPro" id="IPR013760">
    <property type="entry name" value="Topo_IIA-like_dom_sf"/>
</dbReference>
<dbReference type="InterPro" id="IPR013758">
    <property type="entry name" value="Topo_IIA_A/C_ab"/>
</dbReference>
<dbReference type="InterPro" id="IPR013757">
    <property type="entry name" value="Topo_IIA_A_a_sf"/>
</dbReference>
<dbReference type="InterPro" id="IPR002205">
    <property type="entry name" value="Topo_IIA_dom_A"/>
</dbReference>
<dbReference type="InterPro" id="IPR050220">
    <property type="entry name" value="Type_II_DNA_Topoisomerases"/>
</dbReference>
<dbReference type="NCBIfam" id="TIGR01063">
    <property type="entry name" value="gyrA"/>
    <property type="match status" value="1"/>
</dbReference>
<dbReference type="NCBIfam" id="NF004043">
    <property type="entry name" value="PRK05560.1"/>
    <property type="match status" value="1"/>
</dbReference>
<dbReference type="NCBIfam" id="NF004044">
    <property type="entry name" value="PRK05561.1"/>
    <property type="match status" value="1"/>
</dbReference>
<dbReference type="PANTHER" id="PTHR43493:SF5">
    <property type="entry name" value="DNA GYRASE SUBUNIT A, CHLOROPLASTIC_MITOCHONDRIAL"/>
    <property type="match status" value="1"/>
</dbReference>
<dbReference type="PANTHER" id="PTHR43493">
    <property type="entry name" value="DNA GYRASE/TOPOISOMERASE SUBUNIT A"/>
    <property type="match status" value="1"/>
</dbReference>
<dbReference type="Pfam" id="PF03989">
    <property type="entry name" value="DNA_gyraseA_C"/>
    <property type="match status" value="6"/>
</dbReference>
<dbReference type="Pfam" id="PF00521">
    <property type="entry name" value="DNA_topoisoIV"/>
    <property type="match status" value="1"/>
</dbReference>
<dbReference type="SMART" id="SM00434">
    <property type="entry name" value="TOP4c"/>
    <property type="match status" value="1"/>
</dbReference>
<dbReference type="SUPFAM" id="SSF101904">
    <property type="entry name" value="GyrA/ParC C-terminal domain-like"/>
    <property type="match status" value="1"/>
</dbReference>
<dbReference type="SUPFAM" id="SSF56719">
    <property type="entry name" value="Type II DNA topoisomerase"/>
    <property type="match status" value="1"/>
</dbReference>
<dbReference type="PROSITE" id="PS52040">
    <property type="entry name" value="TOPO_IIA"/>
    <property type="match status" value="1"/>
</dbReference>
<feature type="chain" id="PRO_0000145242" description="DNA gyrase subunit A">
    <location>
        <begin position="1"/>
        <end position="842"/>
    </location>
</feature>
<feature type="domain" description="Topo IIA-type catalytic" evidence="2">
    <location>
        <begin position="42"/>
        <end position="511"/>
    </location>
</feature>
<feature type="region of interest" description="Disordered" evidence="3">
    <location>
        <begin position="822"/>
        <end position="842"/>
    </location>
</feature>
<feature type="short sequence motif" description="GyrA-box" evidence="1">
    <location>
        <begin position="538"/>
        <end position="544"/>
    </location>
</feature>
<feature type="active site" description="O-(5'-phospho-DNA)-tyrosine intermediate" evidence="1">
    <location>
        <position position="130"/>
    </location>
</feature>
<comment type="function">
    <text evidence="1 4">A type II topoisomerase that negatively supercoils closed circular double-stranded (ds) DNA in an ATP-dependent manner (PubMed:8878580) to modulate DNA topology and maintain chromosomes in an underwound state. Negative supercoiling favors strand separation, and DNA replication, transcription, recombination and repair, all of which involve strand separation. Also able to catalyze the interconversion of other topological isomers of dsDNA rings, including catenanes and knotted rings. Type II topoisomerases break and join 2 DNA strands simultaneously in an ATP-dependent manner.</text>
</comment>
<comment type="catalytic activity">
    <reaction evidence="1">
        <text>ATP-dependent breakage, passage and rejoining of double-stranded DNA.</text>
        <dbReference type="EC" id="5.6.2.2"/>
    </reaction>
</comment>
<comment type="activity regulation">
    <text evidence="4">Inhibited by 4-quinoline drugs (nalidixic acid, ciprofloxacin, ofloxacin), although it is much less sensitive than the corresponding enzyme from E.coli (PubMed:8878580).</text>
</comment>
<comment type="subunit">
    <text evidence="1 4">Heterotetramer, composed of two GyrA and two GyrB chains (PubMed:8878580). In the heterotetramer, GyrA contains the active site tyrosine that forms a transient covalent intermediate with DNA, while GyrB binds cofactors and catalyzes ATP hydrolysis.</text>
</comment>
<comment type="subcellular location">
    <subcellularLocation>
        <location evidence="1">Cytoplasm</location>
    </subcellularLocation>
</comment>
<comment type="miscellaneous">
    <text evidence="1">Few gyrases are as efficient as E.coli at forming negative supercoils. Not all organisms have 2 type II topoisomerases; in organisms with a single type II topoisomerase this enzyme also has to decatenate newly replicated chromosomes.</text>
</comment>
<comment type="similarity">
    <text evidence="1">Belongs to the type II topoisomerase GyrA/ParC subunit family.</text>
</comment>
<organism>
    <name type="scientific">Mycolicibacterium smegmatis (strain ATCC 700084 / mc(2)155)</name>
    <name type="common">Mycobacterium smegmatis</name>
    <dbReference type="NCBI Taxonomy" id="246196"/>
    <lineage>
        <taxon>Bacteria</taxon>
        <taxon>Bacillati</taxon>
        <taxon>Actinomycetota</taxon>
        <taxon>Actinomycetes</taxon>
        <taxon>Mycobacteriales</taxon>
        <taxon>Mycobacteriaceae</taxon>
        <taxon>Mycolicibacterium</taxon>
    </lineage>
</organism>
<keyword id="KW-0046">Antibiotic resistance</keyword>
<keyword id="KW-0067">ATP-binding</keyword>
<keyword id="KW-0963">Cytoplasm</keyword>
<keyword id="KW-0238">DNA-binding</keyword>
<keyword id="KW-0413">Isomerase</keyword>
<keyword id="KW-0547">Nucleotide-binding</keyword>
<keyword id="KW-1185">Reference proteome</keyword>
<keyword id="KW-0799">Topoisomerase</keyword>
<protein>
    <recommendedName>
        <fullName evidence="1">DNA gyrase subunit A</fullName>
        <ecNumber evidence="1">5.6.2.2</ecNumber>
    </recommendedName>
</protein>
<accession>P48354</accession>
<accession>A0QNE1</accession>
<accession>I7FC85</accession>
<sequence length="842" mass="93183">MTDTTLPPEGEAHDRIEPVDIQQEMQRSYIDYAMSVIVGRALPEVRDGLKPVHRRVLYAMYDSGFRPDRSHAKSARSVAETMGNYHPHGDASIYDTLVRMAQPWSLRYPLVDGQGNFGSPGNDPPAAMRYTEARLTPLAMEMLREIDEETVDFIPNYDGRVQEPTVLPSRFPNLLANGSGGIAVGMATNIPPHNLGELAEAVYWCLENYEADEEATCEAVMERVKGPDFPTSGLIVGTQGIEDTYKTGRGSIKMRGVVEIEEDSRGRTSIVITELPYQVNHDNFITSIAEQVRDGKLAGISNIEDQSSDRVGLRIVVELKRDAVAKVVLNNLYKHTQLQTSFGANMLSIVDGVPRTLRLDQLIRLYVDHQLDVIVRRTRYRLRKANERAHILRGLVKALDALDEVIALIRASQTVDIARAGLIELLDIDDIQAQAILDMQLRRLAALERQKIVDDLAKIEAEIADLEDILAKPERQRGIVRDELKEIVDKHGDARRTRIVPADGEVSDEDLIAREDVVVTITETGYAKRTKTDLYRSQKRGGKGVQGAGLKQDDMVNHFFVCSTHDWILFFTTQGRVYRAKAYELPEASRTARGQHVANLLAFQPEERIAQVIQIKSYEDAPYLVLATRNGLVKKSKLSDFDSNRSGGIVAINLREGDELVGAVLCSAEDDLLLVSANGQSIRFSATDEALRPMGRATSGVQGMRFNEDDRLLSLNVVRPDTYLLVATSGGYAKRTSIDEYSVQGRGGKGILTIQYDRKRGSLVGALIVDDDTELYAITSTGGVIRTAARQVRKAGRQTKGVRLMNLAEGDTLIAIARNADEDEAAESISESDADTAESPEA</sequence>
<evidence type="ECO:0000255" key="1">
    <source>
        <dbReference type="HAMAP-Rule" id="MF_01897"/>
    </source>
</evidence>
<evidence type="ECO:0000255" key="2">
    <source>
        <dbReference type="PROSITE-ProRule" id="PRU01384"/>
    </source>
</evidence>
<evidence type="ECO:0000256" key="3">
    <source>
        <dbReference type="SAM" id="MobiDB-lite"/>
    </source>
</evidence>
<evidence type="ECO:0000269" key="4">
    <source>
    </source>
</evidence>
<name>GYRA_MYCS2</name>